<evidence type="ECO:0000250" key="1">
    <source>
        <dbReference type="UniProtKB" id="O43900"/>
    </source>
</evidence>
<evidence type="ECO:0000255" key="2">
    <source>
        <dbReference type="PROSITE-ProRule" id="PRU00125"/>
    </source>
</evidence>
<evidence type="ECO:0000255" key="3">
    <source>
        <dbReference type="PROSITE-ProRule" id="PRU00636"/>
    </source>
</evidence>
<evidence type="ECO:0000256" key="4">
    <source>
        <dbReference type="SAM" id="MobiDB-lite"/>
    </source>
</evidence>
<evidence type="ECO:0000269" key="5">
    <source>
    </source>
</evidence>
<evidence type="ECO:0000269" key="6">
    <source>
    </source>
</evidence>
<evidence type="ECO:0000269" key="7">
    <source>
    </source>
</evidence>
<evidence type="ECO:0000303" key="8">
    <source>
    </source>
</evidence>
<evidence type="ECO:0000303" key="9">
    <source>
    </source>
</evidence>
<evidence type="ECO:0000303" key="10">
    <source>
    </source>
</evidence>
<evidence type="ECO:0000305" key="11"/>
<evidence type="ECO:0000312" key="12">
    <source>
        <dbReference type="EMBL" id="AAI54996.1"/>
    </source>
</evidence>
<proteinExistence type="evidence at protein level"/>
<reference key="1">
    <citation type="submission" date="2007-11" db="EMBL/GenBank/DDBJ databases">
        <authorList>
            <consortium name="NIH - Xenopus Gene Collection (XGC) project"/>
        </authorList>
    </citation>
    <scope>NUCLEOTIDE SEQUENCE [LARGE SCALE MRNA]</scope>
    <source>
        <tissue>Intestine</tissue>
    </source>
</reference>
<reference key="2">
    <citation type="journal article" date="2012" name="Curr. Top. Dev. Biol.">
        <title>Asymmetric protein localization in planar cell polarity: mechanisms, puzzles, and challenges.</title>
        <authorList>
            <person name="Peng Y."/>
            <person name="Axelrod J.D."/>
        </authorList>
    </citation>
    <scope>REVIEW</scope>
    <scope>FUNCTION</scope>
</reference>
<reference key="3">
    <citation type="journal article" date="2015" name="Dev. Biol.">
        <title>The involvement of PCP proteins in radial cell intercalations during Xenopus embryonic development.</title>
        <authorList>
            <person name="Ossipova O."/>
            <person name="Chu C.W."/>
            <person name="Fillatre J."/>
            <person name="Brott B.K."/>
            <person name="Itoh K."/>
            <person name="Sokol S.Y."/>
        </authorList>
    </citation>
    <scope>TISSUE SPECIFICITY</scope>
    <scope>FUNCTION</scope>
    <scope>INTERACTION WITH VANGL2</scope>
</reference>
<reference key="4">
    <citation type="journal article" date="2016" name="Sci. Rep.">
        <title>Prickle3 synergizes with Wtip to regulate basal body organization and cilia growth.</title>
        <authorList>
            <person name="Chu C.W."/>
            <person name="Ossipova O."/>
            <person name="Ioannou A."/>
            <person name="Sokol S.Y."/>
        </authorList>
    </citation>
    <scope>FUNCTION IN CILIA GROWTH</scope>
    <scope>INTERACTION WITH WTIP</scope>
</reference>
<reference key="5">
    <citation type="journal article" date="2016" name="Elife">
        <title>Wnt proteins can direct planar cell polarity in vertebrate ectoderm.</title>
        <authorList>
            <person name="Chu C.W."/>
            <person name="Sokol S.Y."/>
        </authorList>
    </citation>
    <scope>FUNCTION</scope>
    <scope>INTERACTION WITH VANGL2</scope>
    <scope>SUBCELLULAR LOCATION</scope>
</reference>
<name>PRC3A_XENLA</name>
<dbReference type="EMBL" id="BC154995">
    <property type="protein sequence ID" value="AAI54996.1"/>
    <property type="molecule type" value="mRNA"/>
</dbReference>
<dbReference type="SMR" id="A8WH69"/>
<dbReference type="AGR" id="Xenbase:XB-GENE-940037"/>
<dbReference type="Xenbase" id="XB-GENE-940037">
    <property type="gene designation" value="prickle3.L"/>
</dbReference>
<dbReference type="Proteomes" id="UP000186698">
    <property type="component" value="Unplaced"/>
</dbReference>
<dbReference type="GO" id="GO:0005739">
    <property type="term" value="C:mitochondrion"/>
    <property type="evidence" value="ECO:0007669"/>
    <property type="project" value="UniProtKB-SubCell"/>
</dbReference>
<dbReference type="GO" id="GO:0098797">
    <property type="term" value="C:plasma membrane protein complex"/>
    <property type="evidence" value="ECO:0000314"/>
    <property type="project" value="Xenbase"/>
</dbReference>
<dbReference type="GO" id="GO:0008270">
    <property type="term" value="F:zinc ion binding"/>
    <property type="evidence" value="ECO:0007669"/>
    <property type="project" value="InterPro"/>
</dbReference>
<dbReference type="GO" id="GO:0030030">
    <property type="term" value="P:cell projection organization"/>
    <property type="evidence" value="ECO:0007669"/>
    <property type="project" value="UniProtKB-KW"/>
</dbReference>
<dbReference type="GO" id="GO:0001736">
    <property type="term" value="P:establishment of planar polarity"/>
    <property type="evidence" value="ECO:0000315"/>
    <property type="project" value="Xenbase"/>
</dbReference>
<dbReference type="CDD" id="cd09415">
    <property type="entry name" value="LIM1_Prickle"/>
    <property type="match status" value="1"/>
</dbReference>
<dbReference type="CDD" id="cd09418">
    <property type="entry name" value="LIM2_Prickle"/>
    <property type="match status" value="1"/>
</dbReference>
<dbReference type="CDD" id="cd09420">
    <property type="entry name" value="LIM3_Prickle"/>
    <property type="match status" value="1"/>
</dbReference>
<dbReference type="CDD" id="cd09827">
    <property type="entry name" value="PET_Prickle"/>
    <property type="match status" value="1"/>
</dbReference>
<dbReference type="FunFam" id="2.10.110.10:FF:000035">
    <property type="entry name" value="prickle-like protein 2 isoform X1"/>
    <property type="match status" value="1"/>
</dbReference>
<dbReference type="FunFam" id="2.10.110.10:FF:000005">
    <property type="entry name" value="Testin isoform 1"/>
    <property type="match status" value="1"/>
</dbReference>
<dbReference type="Gene3D" id="2.10.110.10">
    <property type="entry name" value="Cysteine Rich Protein"/>
    <property type="match status" value="3"/>
</dbReference>
<dbReference type="InterPro" id="IPR033725">
    <property type="entry name" value="LIM1_prickle"/>
</dbReference>
<dbReference type="InterPro" id="IPR033726">
    <property type="entry name" value="LIM2_prickle"/>
</dbReference>
<dbReference type="InterPro" id="IPR033727">
    <property type="entry name" value="LIM3_prickle"/>
</dbReference>
<dbReference type="InterPro" id="IPR010442">
    <property type="entry name" value="PET_domain"/>
</dbReference>
<dbReference type="InterPro" id="IPR033723">
    <property type="entry name" value="PET_prickle"/>
</dbReference>
<dbReference type="InterPro" id="IPR047120">
    <property type="entry name" value="Pk/Esn/Tes"/>
</dbReference>
<dbReference type="InterPro" id="IPR001781">
    <property type="entry name" value="Znf_LIM"/>
</dbReference>
<dbReference type="PANTHER" id="PTHR24211">
    <property type="entry name" value="LIM DOMAIN-CONTAINING PROTEIN"/>
    <property type="match status" value="1"/>
</dbReference>
<dbReference type="PANTHER" id="PTHR24211:SF19">
    <property type="entry name" value="PRICKLE PLANAR CELL POLARITY PROTEIN 3"/>
    <property type="match status" value="1"/>
</dbReference>
<dbReference type="Pfam" id="PF00412">
    <property type="entry name" value="LIM"/>
    <property type="match status" value="2"/>
</dbReference>
<dbReference type="Pfam" id="PF06297">
    <property type="entry name" value="PET"/>
    <property type="match status" value="1"/>
</dbReference>
<dbReference type="SMART" id="SM00132">
    <property type="entry name" value="LIM"/>
    <property type="match status" value="3"/>
</dbReference>
<dbReference type="SUPFAM" id="SSF57716">
    <property type="entry name" value="Glucocorticoid receptor-like (DNA-binding domain)"/>
    <property type="match status" value="2"/>
</dbReference>
<dbReference type="PROSITE" id="PS00478">
    <property type="entry name" value="LIM_DOMAIN_1"/>
    <property type="match status" value="2"/>
</dbReference>
<dbReference type="PROSITE" id="PS50023">
    <property type="entry name" value="LIM_DOMAIN_2"/>
    <property type="match status" value="3"/>
</dbReference>
<dbReference type="PROSITE" id="PS51303">
    <property type="entry name" value="PET"/>
    <property type="match status" value="1"/>
</dbReference>
<sequence length="538" mass="60412">RRRRSQGSEVNLTGQGQPCHSCGERCPGFLAHRWRKICQHCQCPWEEHGHTASNQDLERSLCRLVSGSQRDSLCESSSDSSVEKYAWVPSGLNPVQVHQFFKCFPEKKIPFINSPGEKYRLKQLLHQLPPHDSEARYCCSLQGEEEEELLLLFSQKRRLENLGRGCVRPVSGTMSGTVCQQCGHQISVGDVAVFASRAGLGFCWHPQCFTCAQCLELLCDLIYFYQDGKVYCGRHHAELKRPRCLACDEVIFSLECTEAEGFHWHTRHFCCFECECPLGGQRYIMKDQRPFCCSCYERLYAQYCDSCGECIGIDEGQLTYGGQHWHASESCFRCGRCGVCLLGRPFLPRHGQIYCSRSCSVLNATPESSFSPSQTDLSFQKETKDVGTSTNHELDGDSINDCTLSGSRRSLSIIDQTPISRAAPIRSLHSSLRGAPKEFSRECPNRRSLPDLNSHTRTPTRVTFQLPLSSEVKESVSLSHPSFTSSSSSDEEEGYFLGEPIPLPPFLRPPGYSAPPTHAPTSTTKKKKKKKDKSCLLS</sequence>
<keyword id="KW-1003">Cell membrane</keyword>
<keyword id="KW-0970">Cilium biogenesis/degradation</keyword>
<keyword id="KW-0963">Cytoplasm</keyword>
<keyword id="KW-0217">Developmental protein</keyword>
<keyword id="KW-0440">LIM domain</keyword>
<keyword id="KW-0472">Membrane</keyword>
<keyword id="KW-0479">Metal-binding</keyword>
<keyword id="KW-0496">Mitochondrion</keyword>
<keyword id="KW-1185">Reference proteome</keyword>
<keyword id="KW-0677">Repeat</keyword>
<keyword id="KW-0862">Zinc</keyword>
<feature type="chain" id="PRO_0000442108" description="Prickle planar cell polarity protein 3-A">
    <location>
        <begin position="1" status="less than"/>
        <end position="538"/>
    </location>
</feature>
<feature type="domain" description="PET" evidence="3">
    <location>
        <begin position="66"/>
        <end position="175"/>
    </location>
</feature>
<feature type="domain" description="LIM zinc-binding 1" evidence="2">
    <location>
        <begin position="177"/>
        <end position="241"/>
    </location>
</feature>
<feature type="domain" description="LIM zinc-binding 2" evidence="2">
    <location>
        <begin position="242"/>
        <end position="302"/>
    </location>
</feature>
<feature type="domain" description="LIM zinc-binding 3" evidence="2">
    <location>
        <begin position="305"/>
        <end position="366"/>
    </location>
</feature>
<feature type="region of interest" description="Disordered" evidence="4">
    <location>
        <begin position="369"/>
        <end position="398"/>
    </location>
</feature>
<feature type="region of interest" description="Disordered" evidence="4">
    <location>
        <begin position="433"/>
        <end position="463"/>
    </location>
</feature>
<feature type="region of interest" description="Disordered" evidence="4">
    <location>
        <begin position="475"/>
        <end position="538"/>
    </location>
</feature>
<feature type="compositionally biased region" description="Polar residues" evidence="4">
    <location>
        <begin position="369"/>
        <end position="378"/>
    </location>
</feature>
<feature type="compositionally biased region" description="Basic and acidic residues" evidence="4">
    <location>
        <begin position="435"/>
        <end position="449"/>
    </location>
</feature>
<feature type="compositionally biased region" description="Polar residues" evidence="4">
    <location>
        <begin position="451"/>
        <end position="463"/>
    </location>
</feature>
<feature type="compositionally biased region" description="Low complexity" evidence="4">
    <location>
        <begin position="475"/>
        <end position="488"/>
    </location>
</feature>
<feature type="compositionally biased region" description="Low complexity" evidence="4">
    <location>
        <begin position="514"/>
        <end position="523"/>
    </location>
</feature>
<feature type="non-terminal residue" evidence="12">
    <location>
        <position position="1"/>
    </location>
</feature>
<protein>
    <recommendedName>
        <fullName evidence="1">Prickle planar cell polarity protein 3-A</fullName>
    </recommendedName>
    <alternativeName>
        <fullName>LIM domain only protein 6-A</fullName>
        <shortName evidence="10">LMO6-A</shortName>
    </alternativeName>
    <alternativeName>
        <fullName>Prickle-like protein 3-A</fullName>
        <shortName evidence="9">Pk3-A</shortName>
    </alternativeName>
</protein>
<gene>
    <name type="primary">prickle3-a</name>
</gene>
<organism evidence="12">
    <name type="scientific">Xenopus laevis</name>
    <name type="common">African clawed frog</name>
    <dbReference type="NCBI Taxonomy" id="8355"/>
    <lineage>
        <taxon>Eukaryota</taxon>
        <taxon>Metazoa</taxon>
        <taxon>Chordata</taxon>
        <taxon>Craniata</taxon>
        <taxon>Vertebrata</taxon>
        <taxon>Euteleostomi</taxon>
        <taxon>Amphibia</taxon>
        <taxon>Batrachia</taxon>
        <taxon>Anura</taxon>
        <taxon>Pipoidea</taxon>
        <taxon>Pipidae</taxon>
        <taxon>Xenopodinae</taxon>
        <taxon>Xenopus</taxon>
        <taxon>Xenopus</taxon>
    </lineage>
</organism>
<accession>A8WH69</accession>
<comment type="function">
    <text evidence="1 5 6 7 8">Involved in the planar cell polarity (PCP) pathway that is essential for the polarization of epithelial cells during morphogenetic processes, including gastrulation and neurulation (PubMed:26079437, PubMed:27658614). PCP is maintained by two molecular modules, the global and the core modules (PubMed:23140624). Proteins of the core module include the proteins Frizzled (Fz), Disheveled (Dsh), Van Gogh (Vang), Prickle (Pk), Flamingo (Fmi, Celsr) and Diego (Dgo) (PubMed:23140624). The core module proteins develop subcellular asymmetry, accumulating in two groups on opposite sides of epithelial cells (PubMed:23140624). Distinct proximal (Vang, Pk and Fmi) and distal (Fz, Dsh, Dgo and Fmi) complexes segregate to opposite sides of the cell, where they interact with the opposite complex in the neighboring cell at or near the adherents junctions (PubMed:23140624). Directional information to orient polarization with respect to the tissue axes is provided by the global module which involves Wnt proteins (PubMed:23140624). Involved in the organization of the basal body (PubMed:27062996). Involved in cilia growth and positioning (PubMed:27062996). Required for proper assembly, stability, and function of mitochondrial membrane ATP synthase (mitochondrial complex V) (By similarity).</text>
</comment>
<comment type="subunit">
    <text evidence="5 6 7">Interacts with vangl2 via its C-terminus (PubMed:26079437, PubMed:27658614). The vangl2-dependent membrane recruitment of prickle3 is a prerequisite for its polarization (PubMed:27062996). Interacts with wtip. Wtip is involved in the recruitment of prickle3 to the basal body (PubMed:27062996).</text>
</comment>
<comment type="subcellular location">
    <subcellularLocation>
        <location evidence="7">Cytoplasm</location>
    </subcellularLocation>
    <subcellularLocation>
        <location evidence="7">Cell membrane</location>
        <topology evidence="7">Peripheral membrane protein</topology>
        <orientation evidence="7">Cytoplasmic side</orientation>
    </subcellularLocation>
    <subcellularLocation>
        <location evidence="1">Mitochondrion</location>
    </subcellularLocation>
    <text evidence="6 7">Recruited by vangl2 to anterior cell borders. This polarity is controlled by wnt proteins (PubMed:27658614). Wtip is involved in the recruitment of prickle3 to the basal body (PubMed:27062996).</text>
</comment>
<comment type="tissue specificity">
    <text evidence="5">Predominantly expressed in the epidermal ectoderm (PubMed:26079437).</text>
</comment>
<comment type="similarity">
    <text evidence="11">Belongs to the prickle / espinas / testin family.</text>
</comment>